<proteinExistence type="predicted"/>
<feature type="chain" id="PRO_0000453350" description="Transcription factor cghF">
    <location>
        <begin position="1" status="less than"/>
        <end position="528"/>
    </location>
</feature>
<feature type="region of interest" description="Disordered" evidence="1">
    <location>
        <begin position="232"/>
        <end position="283"/>
    </location>
</feature>
<feature type="compositionally biased region" description="Low complexity" evidence="1">
    <location>
        <begin position="238"/>
        <end position="249"/>
    </location>
</feature>
<feature type="compositionally biased region" description="Polar residues" evidence="1">
    <location>
        <begin position="261"/>
        <end position="276"/>
    </location>
</feature>
<feature type="non-terminal residue">
    <location>
        <position position="1"/>
    </location>
</feature>
<reference key="1">
    <citation type="journal article" date="2015" name="Genome Announc.">
        <title>Draft genome sequence of the cellulolytic fungus Chaetomium globosum.</title>
        <authorList>
            <person name="Cuomo C.A."/>
            <person name="Untereiner W.A."/>
            <person name="Ma L.-J."/>
            <person name="Grabherr M."/>
            <person name="Birren B.W."/>
        </authorList>
    </citation>
    <scope>NUCLEOTIDE SEQUENCE [LARGE SCALE GENOMIC DNA]</scope>
    <source>
        <strain>ATCC 6205 / CBS 148.51 / DSM 1962 / NBRC 6347 / NRRL 1970</strain>
    </source>
</reference>
<reference key="2">
    <citation type="journal article" date="2015" name="ChemBioChem">
        <title>Involvement of lipocalin-like CghA in decalin-forming stereoselective intramolecular [4+2] cycloaddition.</title>
        <authorList>
            <person name="Sato M."/>
            <person name="Yagishita F."/>
            <person name="Mino T."/>
            <person name="Uchiyama N."/>
            <person name="Patel A."/>
            <person name="Chooi Y.H."/>
            <person name="Goda Y."/>
            <person name="Xu W."/>
            <person name="Noguchi H."/>
            <person name="Yamamoto T."/>
            <person name="Hotta K."/>
            <person name="Houk K.N."/>
            <person name="Tang Y."/>
            <person name="Watanabe K."/>
        </authorList>
    </citation>
    <scope>FUNCTION</scope>
</reference>
<keyword id="KW-0238">DNA-binding</keyword>
<keyword id="KW-0479">Metal-binding</keyword>
<keyword id="KW-0539">Nucleus</keyword>
<keyword id="KW-1185">Reference proteome</keyword>
<keyword id="KW-0804">Transcription</keyword>
<keyword id="KW-0805">Transcription regulation</keyword>
<keyword id="KW-0862">Zinc</keyword>
<protein>
    <recommendedName>
        <fullName evidence="2">Transcription factor cghF</fullName>
    </recommendedName>
    <alternativeName>
        <fullName evidence="2">Sch210972 biosynthesis cluster protein F</fullName>
    </alternativeName>
</protein>
<organism>
    <name type="scientific">Chaetomium globosum (strain ATCC 6205 / CBS 148.51 / DSM 1962 / NBRC 6347 / NRRL 1970)</name>
    <name type="common">Soil fungus</name>
    <dbReference type="NCBI Taxonomy" id="306901"/>
    <lineage>
        <taxon>Eukaryota</taxon>
        <taxon>Fungi</taxon>
        <taxon>Dikarya</taxon>
        <taxon>Ascomycota</taxon>
        <taxon>Pezizomycotina</taxon>
        <taxon>Sordariomycetes</taxon>
        <taxon>Sordariomycetidae</taxon>
        <taxon>Sordariales</taxon>
        <taxon>Chaetomiaceae</taxon>
        <taxon>Chaetomium</taxon>
    </lineage>
</organism>
<accession>Q2HBN1</accession>
<comment type="function">
    <text evidence="3">Transcription factor that regulates the expression of the gene cluster that mediates the biosynthesis of the tetramic acid Sch210972, a potential anti-HIV fungal natural product that contains a decalin core.</text>
</comment>
<comment type="subcellular location">
    <subcellularLocation>
        <location evidence="3">Nucleus</location>
    </subcellularLocation>
</comment>
<dbReference type="EMBL" id="CH408030">
    <property type="protein sequence ID" value="EAQ90438.1"/>
    <property type="molecule type" value="Genomic_DNA"/>
</dbReference>
<dbReference type="RefSeq" id="XP_001228889.1">
    <property type="nucleotide sequence ID" value="XM_001228888.1"/>
</dbReference>
<dbReference type="SMR" id="Q2HBN1"/>
<dbReference type="STRING" id="306901.Q2HBN1"/>
<dbReference type="GeneID" id="4389927"/>
<dbReference type="VEuPathDB" id="FungiDB:CHGG_02373"/>
<dbReference type="eggNOG" id="ENOG502QSY9">
    <property type="taxonomic scope" value="Eukaryota"/>
</dbReference>
<dbReference type="HOGENOM" id="CLU_007426_5_1_1"/>
<dbReference type="InParanoid" id="Q2HBN1"/>
<dbReference type="OMA" id="TIWLHRK"/>
<dbReference type="OrthoDB" id="4934715at2759"/>
<dbReference type="Proteomes" id="UP000001056">
    <property type="component" value="Unassembled WGS sequence"/>
</dbReference>
<dbReference type="GO" id="GO:0005634">
    <property type="term" value="C:nucleus"/>
    <property type="evidence" value="ECO:0007669"/>
    <property type="project" value="UniProtKB-SubCell"/>
</dbReference>
<dbReference type="GO" id="GO:0003677">
    <property type="term" value="F:DNA binding"/>
    <property type="evidence" value="ECO:0007669"/>
    <property type="project" value="UniProtKB-KW"/>
</dbReference>
<dbReference type="GO" id="GO:0046872">
    <property type="term" value="F:metal ion binding"/>
    <property type="evidence" value="ECO:0007669"/>
    <property type="project" value="UniProtKB-KW"/>
</dbReference>
<dbReference type="CDD" id="cd12148">
    <property type="entry name" value="fungal_TF_MHR"/>
    <property type="match status" value="1"/>
</dbReference>
<dbReference type="InterPro" id="IPR050613">
    <property type="entry name" value="Sec_Metabolite_Reg"/>
</dbReference>
<dbReference type="PANTHER" id="PTHR31001">
    <property type="entry name" value="UNCHARACTERIZED TRANSCRIPTIONAL REGULATORY PROTEIN"/>
    <property type="match status" value="1"/>
</dbReference>
<dbReference type="PANTHER" id="PTHR31001:SF74">
    <property type="entry name" value="ZN(II)2CYS6 TRANSCRIPTION FACTOR (EUROFUNG)"/>
    <property type="match status" value="1"/>
</dbReference>
<evidence type="ECO:0000256" key="1">
    <source>
        <dbReference type="SAM" id="MobiDB-lite"/>
    </source>
</evidence>
<evidence type="ECO:0000303" key="2">
    <source>
    </source>
</evidence>
<evidence type="ECO:0000305" key="3">
    <source>
    </source>
</evidence>
<gene>
    <name evidence="2" type="primary">cghF</name>
    <name type="ORF">CHGG_02373</name>
</gene>
<name>CGHF_CHAGB</name>
<sequence>MREHSHGANYVSSVHWAAVLDSISELIDQCQEKEKEKKPVPEDGSIAPQIPGPRLLYEPVKETKAEILASMPARTVVDRMVARYFNALGIAPAILHSAQFLREYESFWKDPDATPFVWIGLLFSVICLAVQFQQPGEEAAEWSSLMRIRQFHDRIVQCLVLGQYTRGGPYVVETMVNYCASELCITKDTDVGPWLPLGIMVPLAVSRGYHRDPAGFPNISPFAGEMRRRVATPPNHATSSTPTSTRTPPTYHPHGPRPKSPLSSTPSPRTESTKSAAPSRDLAADAHDRPYPEILALDKDLQTIETSLPPIFRWQPLSQSFMVPGQVLMFRLWLRLAVLRLVIWLHRKYLAPAYSAAPYAYSRAACARAALEIAEFQLLLHEETRPGGQLHQMRWMQSSLMQSTFLLGMSVACYWMQLTRTALPGADQDMEMRERIRDRLRDTYPLWLRCSAVSRDAREAAERLRQLPDLQGLLPDVEGQLSAQESPGSGVPACWDIFHGTGRHARALDAVLGDMDRSRKTNADWARV</sequence>